<keyword id="KW-0328">Glycosyltransferase</keyword>
<keyword id="KW-0460">Magnesium</keyword>
<keyword id="KW-0479">Metal-binding</keyword>
<keyword id="KW-1185">Reference proteome</keyword>
<keyword id="KW-0808">Transferase</keyword>
<gene>
    <name evidence="1" type="primary">mshA</name>
    <name type="ordered locus">cauri_0284</name>
</gene>
<accession>C3PK12</accession>
<sequence>MRIAMISMHTSPLEQPGSGDAGGMNVYVLNTARQLARLGVEVDIFTRATRPSQGEVVDVEERLRVINIVAGPYEGLSKEELPTQLAAFTGGIFNFARCFEVDYDVIHSHYWLSGQVGWLLRDLWDIPLVHTAHTLAAVKNVHRTLDDTPETEARRICEQQLVDNADILVVNTAQETRDLIEHYDASPDNIVVVSPGADTDLYTPGTDRMTERARRQLGIPLHTKVVAFVGRLQKFKGPDVLIRATAELMERDPDRRLRVVICGGASGANSSPDTYHNLARELGVERVVRFLSPRPPQELVAIYQAADIVAVPSYNESFGLVAMEAQASGTPVVAAAVGGLPIAVADGDTGLLVHSHSAQDWADALEQLLDDDPRRISMGEAAVDHAQQFSWAAAATQLENIYADAMSIEIPDCHARRAIGY</sequence>
<reference key="1">
    <citation type="journal article" date="2010" name="BMC Genomics">
        <title>Complete genome sequence and lifestyle of black-pigmented Corynebacterium aurimucosum ATCC 700975 (formerly C. nigricans CN-1) isolated from a vaginal swab of a woman with spontaneous abortion.</title>
        <authorList>
            <person name="Trost E."/>
            <person name="Gotker S."/>
            <person name="Schneider J."/>
            <person name="Schneiker-Bekel S."/>
            <person name="Szczepanowski R."/>
            <person name="Tilker A."/>
            <person name="Viehoever P."/>
            <person name="Arnold W."/>
            <person name="Bekel T."/>
            <person name="Blom J."/>
            <person name="Gartemann K.H."/>
            <person name="Linke B."/>
            <person name="Goesmann A."/>
            <person name="Puhler A."/>
            <person name="Shukla S.K."/>
            <person name="Tauch A."/>
        </authorList>
    </citation>
    <scope>NUCLEOTIDE SEQUENCE [LARGE SCALE GENOMIC DNA]</scope>
    <source>
        <strain>ATCC 700975 / DSM 44827 / CIP 107346 / CN-1</strain>
    </source>
</reference>
<proteinExistence type="inferred from homology"/>
<name>MSHA_CORA7</name>
<dbReference type="EC" id="2.4.1.250" evidence="1"/>
<dbReference type="EMBL" id="CP001601">
    <property type="protein sequence ID" value="ACP31883.1"/>
    <property type="molecule type" value="Genomic_DNA"/>
</dbReference>
<dbReference type="RefSeq" id="WP_010189828.1">
    <property type="nucleotide sequence ID" value="NC_012590.1"/>
</dbReference>
<dbReference type="SMR" id="C3PK12"/>
<dbReference type="STRING" id="548476.cauri_0284"/>
<dbReference type="CAZy" id="GT4">
    <property type="family name" value="Glycosyltransferase Family 4"/>
</dbReference>
<dbReference type="GeneID" id="31922904"/>
<dbReference type="KEGG" id="car:cauri_0284"/>
<dbReference type="eggNOG" id="COG0438">
    <property type="taxonomic scope" value="Bacteria"/>
</dbReference>
<dbReference type="HOGENOM" id="CLU_009583_2_3_11"/>
<dbReference type="OrthoDB" id="9810929at2"/>
<dbReference type="Proteomes" id="UP000002077">
    <property type="component" value="Chromosome"/>
</dbReference>
<dbReference type="GO" id="GO:0008375">
    <property type="term" value="F:acetylglucosaminyltransferase activity"/>
    <property type="evidence" value="ECO:0007669"/>
    <property type="project" value="UniProtKB-UniRule"/>
</dbReference>
<dbReference type="GO" id="GO:0102710">
    <property type="term" value="F:D-inositol-3-phosphate glycosyltransferase activity"/>
    <property type="evidence" value="ECO:0007669"/>
    <property type="project" value="UniProtKB-EC"/>
</dbReference>
<dbReference type="GO" id="GO:0000287">
    <property type="term" value="F:magnesium ion binding"/>
    <property type="evidence" value="ECO:0007669"/>
    <property type="project" value="UniProtKB-UniRule"/>
</dbReference>
<dbReference type="GO" id="GO:1903509">
    <property type="term" value="P:liposaccharide metabolic process"/>
    <property type="evidence" value="ECO:0007669"/>
    <property type="project" value="UniProtKB-ARBA"/>
</dbReference>
<dbReference type="GO" id="GO:0010125">
    <property type="term" value="P:mycothiol biosynthetic process"/>
    <property type="evidence" value="ECO:0007669"/>
    <property type="project" value="UniProtKB-UniRule"/>
</dbReference>
<dbReference type="CDD" id="cd03800">
    <property type="entry name" value="GT4_sucrose_synthase"/>
    <property type="match status" value="1"/>
</dbReference>
<dbReference type="Gene3D" id="3.40.50.2000">
    <property type="entry name" value="Glycogen Phosphorylase B"/>
    <property type="match status" value="2"/>
</dbReference>
<dbReference type="HAMAP" id="MF_01695">
    <property type="entry name" value="MshA"/>
    <property type="match status" value="1"/>
</dbReference>
<dbReference type="InterPro" id="IPR001296">
    <property type="entry name" value="Glyco_trans_1"/>
</dbReference>
<dbReference type="InterPro" id="IPR028098">
    <property type="entry name" value="Glyco_trans_4-like_N"/>
</dbReference>
<dbReference type="InterPro" id="IPR050194">
    <property type="entry name" value="Glycosyltransferase_grp1"/>
</dbReference>
<dbReference type="InterPro" id="IPR017814">
    <property type="entry name" value="Mycothiol_biosynthesis_MshA"/>
</dbReference>
<dbReference type="NCBIfam" id="TIGR03449">
    <property type="entry name" value="mycothiol_MshA"/>
    <property type="match status" value="1"/>
</dbReference>
<dbReference type="PANTHER" id="PTHR45947">
    <property type="entry name" value="SULFOQUINOVOSYL TRANSFERASE SQD2"/>
    <property type="match status" value="1"/>
</dbReference>
<dbReference type="PANTHER" id="PTHR45947:SF3">
    <property type="entry name" value="SULFOQUINOVOSYL TRANSFERASE SQD2"/>
    <property type="match status" value="1"/>
</dbReference>
<dbReference type="Pfam" id="PF13579">
    <property type="entry name" value="Glyco_trans_4_4"/>
    <property type="match status" value="1"/>
</dbReference>
<dbReference type="Pfam" id="PF00534">
    <property type="entry name" value="Glycos_transf_1"/>
    <property type="match status" value="1"/>
</dbReference>
<dbReference type="SUPFAM" id="SSF53756">
    <property type="entry name" value="UDP-Glycosyltransferase/glycogen phosphorylase"/>
    <property type="match status" value="1"/>
</dbReference>
<protein>
    <recommendedName>
        <fullName>D-inositol 3-phosphate glycosyltransferase</fullName>
        <ecNumber evidence="1">2.4.1.250</ecNumber>
    </recommendedName>
    <alternativeName>
        <fullName evidence="1">N-acetylglucosamine-inositol-phosphate N-acetylglucosaminyltransferase</fullName>
        <shortName evidence="1">GlcNAc-Ins-P N-acetylglucosaminyltransferase</shortName>
    </alternativeName>
</protein>
<feature type="chain" id="PRO_0000400115" description="D-inositol 3-phosphate glycosyltransferase">
    <location>
        <begin position="1"/>
        <end position="421"/>
    </location>
</feature>
<feature type="binding site" evidence="1">
    <location>
        <position position="9"/>
    </location>
    <ligand>
        <name>1D-myo-inositol 3-phosphate</name>
        <dbReference type="ChEBI" id="CHEBI:58401"/>
    </ligand>
</feature>
<feature type="binding site" evidence="1">
    <location>
        <begin position="15"/>
        <end position="16"/>
    </location>
    <ligand>
        <name>UDP-N-acetyl-alpha-D-glucosamine</name>
        <dbReference type="ChEBI" id="CHEBI:57705"/>
    </ligand>
</feature>
<feature type="binding site" evidence="1">
    <location>
        <begin position="20"/>
        <end position="25"/>
    </location>
    <ligand>
        <name>1D-myo-inositol 3-phosphate</name>
        <dbReference type="ChEBI" id="CHEBI:58401"/>
    </ligand>
</feature>
<feature type="binding site" evidence="1">
    <location>
        <position position="23"/>
    </location>
    <ligand>
        <name>UDP-N-acetyl-alpha-D-glucosamine</name>
        <dbReference type="ChEBI" id="CHEBI:57705"/>
    </ligand>
</feature>
<feature type="binding site" evidence="1">
    <location>
        <position position="78"/>
    </location>
    <ligand>
        <name>1D-myo-inositol 3-phosphate</name>
        <dbReference type="ChEBI" id="CHEBI:58401"/>
    </ligand>
</feature>
<feature type="binding site" evidence="1">
    <location>
        <position position="110"/>
    </location>
    <ligand>
        <name>1D-myo-inositol 3-phosphate</name>
        <dbReference type="ChEBI" id="CHEBI:58401"/>
    </ligand>
</feature>
<feature type="binding site" evidence="1">
    <location>
        <position position="134"/>
    </location>
    <ligand>
        <name>1D-myo-inositol 3-phosphate</name>
        <dbReference type="ChEBI" id="CHEBI:58401"/>
    </ligand>
</feature>
<feature type="binding site" evidence="1">
    <location>
        <position position="154"/>
    </location>
    <ligand>
        <name>1D-myo-inositol 3-phosphate</name>
        <dbReference type="ChEBI" id="CHEBI:58401"/>
    </ligand>
</feature>
<feature type="binding site" evidence="1">
    <location>
        <position position="231"/>
    </location>
    <ligand>
        <name>UDP-N-acetyl-alpha-D-glucosamine</name>
        <dbReference type="ChEBI" id="CHEBI:57705"/>
    </ligand>
</feature>
<feature type="binding site" evidence="1">
    <location>
        <position position="236"/>
    </location>
    <ligand>
        <name>UDP-N-acetyl-alpha-D-glucosamine</name>
        <dbReference type="ChEBI" id="CHEBI:57705"/>
    </ligand>
</feature>
<feature type="binding site" evidence="1">
    <location>
        <position position="294"/>
    </location>
    <ligand>
        <name>UDP-N-acetyl-alpha-D-glucosamine</name>
        <dbReference type="ChEBI" id="CHEBI:57705"/>
    </ligand>
</feature>
<feature type="binding site" evidence="1">
    <location>
        <position position="303"/>
    </location>
    <ligand>
        <name>Mg(2+)</name>
        <dbReference type="ChEBI" id="CHEBI:18420"/>
    </ligand>
</feature>
<feature type="binding site" evidence="1">
    <location>
        <position position="304"/>
    </location>
    <ligand>
        <name>Mg(2+)</name>
        <dbReference type="ChEBI" id="CHEBI:18420"/>
    </ligand>
</feature>
<feature type="binding site" evidence="1">
    <location>
        <position position="306"/>
    </location>
    <ligand>
        <name>Mg(2+)</name>
        <dbReference type="ChEBI" id="CHEBI:18420"/>
    </ligand>
</feature>
<feature type="binding site" evidence="1">
    <location>
        <position position="316"/>
    </location>
    <ligand>
        <name>UDP-N-acetyl-alpha-D-glucosamine</name>
        <dbReference type="ChEBI" id="CHEBI:57705"/>
    </ligand>
</feature>
<feature type="binding site" evidence="1">
    <location>
        <position position="324"/>
    </location>
    <ligand>
        <name>UDP-N-acetyl-alpha-D-glucosamine</name>
        <dbReference type="ChEBI" id="CHEBI:57705"/>
    </ligand>
</feature>
<feature type="binding site" evidence="1">
    <location>
        <position position="330"/>
    </location>
    <ligand>
        <name>Mg(2+)</name>
        <dbReference type="ChEBI" id="CHEBI:18420"/>
    </ligand>
</feature>
<comment type="function">
    <text evidence="1">Catalyzes the transfer of a N-acetyl-glucosamine moiety to 1D-myo-inositol 3-phosphate to produce 1D-myo-inositol 2-acetamido-2-deoxy-glucopyranoside 3-phosphate in the mycothiol biosynthesis pathway.</text>
</comment>
<comment type="catalytic activity">
    <reaction evidence="1">
        <text>1D-myo-inositol 3-phosphate + UDP-N-acetyl-alpha-D-glucosamine = 1D-myo-inositol 2-acetamido-2-deoxy-alpha-D-glucopyranoside 3-phosphate + UDP + H(+)</text>
        <dbReference type="Rhea" id="RHEA:26188"/>
        <dbReference type="ChEBI" id="CHEBI:15378"/>
        <dbReference type="ChEBI" id="CHEBI:57705"/>
        <dbReference type="ChEBI" id="CHEBI:58223"/>
        <dbReference type="ChEBI" id="CHEBI:58401"/>
        <dbReference type="ChEBI" id="CHEBI:58892"/>
        <dbReference type="EC" id="2.4.1.250"/>
    </reaction>
</comment>
<comment type="subunit">
    <text evidence="1">Homodimer.</text>
</comment>
<comment type="similarity">
    <text evidence="1">Belongs to the glycosyltransferase group 1 family. MshA subfamily.</text>
</comment>
<organism>
    <name type="scientific">Corynebacterium aurimucosum (strain ATCC 700975 / DSM 44827 / CIP 107346 / CN-1)</name>
    <name type="common">Corynebacterium nigricans</name>
    <dbReference type="NCBI Taxonomy" id="548476"/>
    <lineage>
        <taxon>Bacteria</taxon>
        <taxon>Bacillati</taxon>
        <taxon>Actinomycetota</taxon>
        <taxon>Actinomycetes</taxon>
        <taxon>Mycobacteriales</taxon>
        <taxon>Corynebacteriaceae</taxon>
        <taxon>Corynebacterium</taxon>
    </lineage>
</organism>
<evidence type="ECO:0000255" key="1">
    <source>
        <dbReference type="HAMAP-Rule" id="MF_01695"/>
    </source>
</evidence>